<name>GMHA_SALG2</name>
<accession>B5R5Q7</accession>
<sequence>MYQDLIRNELNEAAETLANFLKDDANIHAIQRAAVLLADSFKAGGKVLSCGNGGSHCDAMHFAEELTGRYRENRPGYPAIAISDVSHISCVSNDFGYDYIFSRYVEAVGREGDVLLGISTSGNSGNVIKAIAAAREKGMKVITLTGKDGGKMAGTADIEIRVPHFGYADRIQEIHIKVIHILIQLIEKEMVK</sequence>
<reference key="1">
    <citation type="journal article" date="2008" name="Genome Res.">
        <title>Comparative genome analysis of Salmonella enteritidis PT4 and Salmonella gallinarum 287/91 provides insights into evolutionary and host adaptation pathways.</title>
        <authorList>
            <person name="Thomson N.R."/>
            <person name="Clayton D.J."/>
            <person name="Windhorst D."/>
            <person name="Vernikos G."/>
            <person name="Davidson S."/>
            <person name="Churcher C."/>
            <person name="Quail M.A."/>
            <person name="Stevens M."/>
            <person name="Jones M.A."/>
            <person name="Watson M."/>
            <person name="Barron A."/>
            <person name="Layton A."/>
            <person name="Pickard D."/>
            <person name="Kingsley R.A."/>
            <person name="Bignell A."/>
            <person name="Clark L."/>
            <person name="Harris B."/>
            <person name="Ormond D."/>
            <person name="Abdellah Z."/>
            <person name="Brooks K."/>
            <person name="Cherevach I."/>
            <person name="Chillingworth T."/>
            <person name="Woodward J."/>
            <person name="Norberczak H."/>
            <person name="Lord A."/>
            <person name="Arrowsmith C."/>
            <person name="Jagels K."/>
            <person name="Moule S."/>
            <person name="Mungall K."/>
            <person name="Saunders M."/>
            <person name="Whitehead S."/>
            <person name="Chabalgoity J.A."/>
            <person name="Maskell D."/>
            <person name="Humphreys T."/>
            <person name="Roberts M."/>
            <person name="Barrow P.A."/>
            <person name="Dougan G."/>
            <person name="Parkhill J."/>
        </authorList>
    </citation>
    <scope>NUCLEOTIDE SEQUENCE [LARGE SCALE GENOMIC DNA]</scope>
    <source>
        <strain>287/91 / NCTC 13346</strain>
    </source>
</reference>
<feature type="chain" id="PRO_1000092289" description="Phosphoheptose isomerase">
    <location>
        <begin position="1"/>
        <end position="192"/>
    </location>
</feature>
<feature type="domain" description="SIS" evidence="1">
    <location>
        <begin position="37"/>
        <end position="192"/>
    </location>
</feature>
<feature type="binding site" evidence="1">
    <location>
        <begin position="52"/>
        <end position="54"/>
    </location>
    <ligand>
        <name>substrate</name>
    </ligand>
</feature>
<feature type="binding site" evidence="1">
    <location>
        <position position="61"/>
    </location>
    <ligand>
        <name>Zn(2+)</name>
        <dbReference type="ChEBI" id="CHEBI:29105"/>
    </ligand>
</feature>
<feature type="binding site" evidence="1">
    <location>
        <position position="65"/>
    </location>
    <ligand>
        <name>substrate</name>
    </ligand>
</feature>
<feature type="binding site" evidence="1">
    <location>
        <position position="65"/>
    </location>
    <ligand>
        <name>Zn(2+)</name>
        <dbReference type="ChEBI" id="CHEBI:29105"/>
    </ligand>
</feature>
<feature type="binding site" evidence="1">
    <location>
        <begin position="93"/>
        <end position="94"/>
    </location>
    <ligand>
        <name>substrate</name>
    </ligand>
</feature>
<feature type="binding site" evidence="1">
    <location>
        <begin position="119"/>
        <end position="121"/>
    </location>
    <ligand>
        <name>substrate</name>
    </ligand>
</feature>
<feature type="binding site" evidence="1">
    <location>
        <position position="124"/>
    </location>
    <ligand>
        <name>substrate</name>
    </ligand>
</feature>
<feature type="binding site" evidence="1">
    <location>
        <position position="172"/>
    </location>
    <ligand>
        <name>substrate</name>
    </ligand>
</feature>
<feature type="binding site" evidence="1">
    <location>
        <position position="172"/>
    </location>
    <ligand>
        <name>Zn(2+)</name>
        <dbReference type="ChEBI" id="CHEBI:29105"/>
    </ligand>
</feature>
<feature type="binding site" evidence="1">
    <location>
        <position position="180"/>
    </location>
    <ligand>
        <name>Zn(2+)</name>
        <dbReference type="ChEBI" id="CHEBI:29105"/>
    </ligand>
</feature>
<keyword id="KW-0119">Carbohydrate metabolism</keyword>
<keyword id="KW-0963">Cytoplasm</keyword>
<keyword id="KW-0413">Isomerase</keyword>
<keyword id="KW-0479">Metal-binding</keyword>
<keyword id="KW-0862">Zinc</keyword>
<gene>
    <name evidence="1" type="primary">gmhA</name>
    <name type="ordered locus">SG0321</name>
</gene>
<proteinExistence type="inferred from homology"/>
<dbReference type="EC" id="5.3.1.28" evidence="1"/>
<dbReference type="EMBL" id="AM933173">
    <property type="protein sequence ID" value="CAR36223.1"/>
    <property type="molecule type" value="Genomic_DNA"/>
</dbReference>
<dbReference type="SMR" id="B5R5Q7"/>
<dbReference type="KEGG" id="seg:SG0321"/>
<dbReference type="HOGENOM" id="CLU_080999_4_0_6"/>
<dbReference type="UniPathway" id="UPA00041">
    <property type="reaction ID" value="UER00436"/>
</dbReference>
<dbReference type="Proteomes" id="UP000008321">
    <property type="component" value="Chromosome"/>
</dbReference>
<dbReference type="GO" id="GO:0005737">
    <property type="term" value="C:cytoplasm"/>
    <property type="evidence" value="ECO:0007669"/>
    <property type="project" value="UniProtKB-SubCell"/>
</dbReference>
<dbReference type="GO" id="GO:0097367">
    <property type="term" value="F:carbohydrate derivative binding"/>
    <property type="evidence" value="ECO:0007669"/>
    <property type="project" value="InterPro"/>
</dbReference>
<dbReference type="GO" id="GO:0008968">
    <property type="term" value="F:D-sedoheptulose 7-phosphate isomerase activity"/>
    <property type="evidence" value="ECO:0007669"/>
    <property type="project" value="UniProtKB-UniRule"/>
</dbReference>
<dbReference type="GO" id="GO:0008270">
    <property type="term" value="F:zinc ion binding"/>
    <property type="evidence" value="ECO:0007669"/>
    <property type="project" value="UniProtKB-UniRule"/>
</dbReference>
<dbReference type="GO" id="GO:0005975">
    <property type="term" value="P:carbohydrate metabolic process"/>
    <property type="evidence" value="ECO:0007669"/>
    <property type="project" value="UniProtKB-UniRule"/>
</dbReference>
<dbReference type="GO" id="GO:2001061">
    <property type="term" value="P:D-glycero-D-manno-heptose 7-phosphate biosynthetic process"/>
    <property type="evidence" value="ECO:0007669"/>
    <property type="project" value="UniProtKB-UniPathway"/>
</dbReference>
<dbReference type="CDD" id="cd05006">
    <property type="entry name" value="SIS_GmhA"/>
    <property type="match status" value="1"/>
</dbReference>
<dbReference type="FunFam" id="3.40.50.10490:FF:000013">
    <property type="entry name" value="Phosphoheptose isomerase"/>
    <property type="match status" value="1"/>
</dbReference>
<dbReference type="Gene3D" id="3.40.50.10490">
    <property type="entry name" value="Glucose-6-phosphate isomerase like protein, domain 1"/>
    <property type="match status" value="1"/>
</dbReference>
<dbReference type="HAMAP" id="MF_00067">
    <property type="entry name" value="GmhA"/>
    <property type="match status" value="1"/>
</dbReference>
<dbReference type="InterPro" id="IPR035461">
    <property type="entry name" value="GmhA/DiaA"/>
</dbReference>
<dbReference type="InterPro" id="IPR004515">
    <property type="entry name" value="Phosphoheptose_Isoase"/>
</dbReference>
<dbReference type="InterPro" id="IPR001347">
    <property type="entry name" value="SIS_dom"/>
</dbReference>
<dbReference type="InterPro" id="IPR046348">
    <property type="entry name" value="SIS_dom_sf"/>
</dbReference>
<dbReference type="InterPro" id="IPR050099">
    <property type="entry name" value="SIS_GmhA/DiaA_subfam"/>
</dbReference>
<dbReference type="NCBIfam" id="TIGR00441">
    <property type="entry name" value="gmhA"/>
    <property type="match status" value="1"/>
</dbReference>
<dbReference type="NCBIfam" id="NF001628">
    <property type="entry name" value="PRK00414.1"/>
    <property type="match status" value="1"/>
</dbReference>
<dbReference type="PANTHER" id="PTHR30390:SF7">
    <property type="entry name" value="PHOSPHOHEPTOSE ISOMERASE"/>
    <property type="match status" value="1"/>
</dbReference>
<dbReference type="PANTHER" id="PTHR30390">
    <property type="entry name" value="SEDOHEPTULOSE 7-PHOSPHATE ISOMERASE / DNAA INITIATOR-ASSOCIATING FACTOR FOR REPLICATION INITIATION"/>
    <property type="match status" value="1"/>
</dbReference>
<dbReference type="Pfam" id="PF13580">
    <property type="entry name" value="SIS_2"/>
    <property type="match status" value="1"/>
</dbReference>
<dbReference type="SUPFAM" id="SSF53697">
    <property type="entry name" value="SIS domain"/>
    <property type="match status" value="1"/>
</dbReference>
<dbReference type="PROSITE" id="PS51464">
    <property type="entry name" value="SIS"/>
    <property type="match status" value="1"/>
</dbReference>
<comment type="function">
    <text evidence="1">Catalyzes the isomerization of sedoheptulose 7-phosphate in D-glycero-D-manno-heptose 7-phosphate.</text>
</comment>
<comment type="catalytic activity">
    <reaction evidence="1">
        <text>2 D-sedoheptulose 7-phosphate = D-glycero-alpha-D-manno-heptose 7-phosphate + D-glycero-beta-D-manno-heptose 7-phosphate</text>
        <dbReference type="Rhea" id="RHEA:27489"/>
        <dbReference type="ChEBI" id="CHEBI:57483"/>
        <dbReference type="ChEBI" id="CHEBI:60203"/>
        <dbReference type="ChEBI" id="CHEBI:60204"/>
        <dbReference type="EC" id="5.3.1.28"/>
    </reaction>
</comment>
<comment type="cofactor">
    <cofactor evidence="1">
        <name>Zn(2+)</name>
        <dbReference type="ChEBI" id="CHEBI:29105"/>
    </cofactor>
    <text evidence="1">Binds 1 zinc ion per subunit.</text>
</comment>
<comment type="pathway">
    <text evidence="1">Carbohydrate biosynthesis; D-glycero-D-manno-heptose 7-phosphate biosynthesis; D-glycero-alpha-D-manno-heptose 7-phosphate and D-glycero-beta-D-manno-heptose 7-phosphate from sedoheptulose 7-phosphate: step 1/1.</text>
</comment>
<comment type="subunit">
    <text evidence="1">Homotetramer.</text>
</comment>
<comment type="subcellular location">
    <subcellularLocation>
        <location evidence="1">Cytoplasm</location>
    </subcellularLocation>
</comment>
<comment type="miscellaneous">
    <text evidence="1">The reaction produces a racemic mixture of D-glycero-alpha-D-manno-heptose 7-phosphate and D-glycero-beta-D-manno-heptose 7-phosphate.</text>
</comment>
<comment type="similarity">
    <text evidence="1">Belongs to the SIS family. GmhA subfamily.</text>
</comment>
<evidence type="ECO:0000255" key="1">
    <source>
        <dbReference type="HAMAP-Rule" id="MF_00067"/>
    </source>
</evidence>
<organism>
    <name type="scientific">Salmonella gallinarum (strain 287/91 / NCTC 13346)</name>
    <dbReference type="NCBI Taxonomy" id="550538"/>
    <lineage>
        <taxon>Bacteria</taxon>
        <taxon>Pseudomonadati</taxon>
        <taxon>Pseudomonadota</taxon>
        <taxon>Gammaproteobacteria</taxon>
        <taxon>Enterobacterales</taxon>
        <taxon>Enterobacteriaceae</taxon>
        <taxon>Salmonella</taxon>
    </lineage>
</organism>
<protein>
    <recommendedName>
        <fullName evidence="1">Phosphoheptose isomerase</fullName>
        <ecNumber evidence="1">5.3.1.28</ecNumber>
    </recommendedName>
    <alternativeName>
        <fullName evidence="1">Sedoheptulose 7-phosphate isomerase</fullName>
    </alternativeName>
</protein>